<name>DNAA_ECO8A</name>
<evidence type="ECO:0000255" key="1">
    <source>
        <dbReference type="HAMAP-Rule" id="MF_00377"/>
    </source>
</evidence>
<evidence type="ECO:0000256" key="2">
    <source>
        <dbReference type="SAM" id="MobiDB-lite"/>
    </source>
</evidence>
<keyword id="KW-0067">ATP-binding</keyword>
<keyword id="KW-0963">Cytoplasm</keyword>
<keyword id="KW-0235">DNA replication</keyword>
<keyword id="KW-0238">DNA-binding</keyword>
<keyword id="KW-0446">Lipid-binding</keyword>
<keyword id="KW-0547">Nucleotide-binding</keyword>
<accession>B7M553</accession>
<comment type="function">
    <text evidence="1">Plays an essential role in the initiation and regulation of chromosomal replication. ATP-DnaA binds to the origin of replication (oriC) to initiate formation of the DNA replication initiation complex once per cell cycle. Binds the DnaA box (a 9 base pair repeat at the origin) and separates the double-stranded (ds)DNA. Forms a right-handed helical filament on oriC DNA; dsDNA binds to the exterior of the filament while single-stranded (ss)DNA is stabiized in the filament's interior. The ATP-DnaA-oriC complex binds and stabilizes one strand of the AT-rich DNA unwinding element (DUE), permitting loading of DNA polymerase. After initiation quickly degrades to an ADP-DnaA complex that is not apt for DNA replication. Binds acidic phospholipids.</text>
</comment>
<comment type="subunit">
    <text evidence="1">Oligomerizes as a right-handed, spiral filament on DNA at oriC.</text>
</comment>
<comment type="subcellular location">
    <subcellularLocation>
        <location evidence="1">Cytoplasm</location>
    </subcellularLocation>
</comment>
<comment type="domain">
    <text evidence="1">Domain I is involved in oligomerization and binding regulators, domain II is flexibile and of varying length in different bacteria, domain III forms the AAA+ region, while domain IV binds dsDNA.</text>
</comment>
<comment type="similarity">
    <text evidence="1">Belongs to the DnaA family.</text>
</comment>
<dbReference type="EMBL" id="CU928160">
    <property type="protein sequence ID" value="CAR00675.1"/>
    <property type="molecule type" value="Genomic_DNA"/>
</dbReference>
<dbReference type="RefSeq" id="WP_000059111.1">
    <property type="nucleotide sequence ID" value="NC_011741.1"/>
</dbReference>
<dbReference type="SMR" id="B7M553"/>
<dbReference type="GeneID" id="93778443"/>
<dbReference type="KEGG" id="ecr:ECIAI1_3880"/>
<dbReference type="HOGENOM" id="CLU_026910_0_1_6"/>
<dbReference type="GO" id="GO:0005737">
    <property type="term" value="C:cytoplasm"/>
    <property type="evidence" value="ECO:0007669"/>
    <property type="project" value="UniProtKB-SubCell"/>
</dbReference>
<dbReference type="GO" id="GO:0005886">
    <property type="term" value="C:plasma membrane"/>
    <property type="evidence" value="ECO:0007669"/>
    <property type="project" value="TreeGrafter"/>
</dbReference>
<dbReference type="GO" id="GO:0005524">
    <property type="term" value="F:ATP binding"/>
    <property type="evidence" value="ECO:0007669"/>
    <property type="project" value="UniProtKB-UniRule"/>
</dbReference>
<dbReference type="GO" id="GO:0016887">
    <property type="term" value="F:ATP hydrolysis activity"/>
    <property type="evidence" value="ECO:0007669"/>
    <property type="project" value="InterPro"/>
</dbReference>
<dbReference type="GO" id="GO:0003688">
    <property type="term" value="F:DNA replication origin binding"/>
    <property type="evidence" value="ECO:0007669"/>
    <property type="project" value="UniProtKB-UniRule"/>
</dbReference>
<dbReference type="GO" id="GO:0008289">
    <property type="term" value="F:lipid binding"/>
    <property type="evidence" value="ECO:0007669"/>
    <property type="project" value="UniProtKB-KW"/>
</dbReference>
<dbReference type="GO" id="GO:0006270">
    <property type="term" value="P:DNA replication initiation"/>
    <property type="evidence" value="ECO:0007669"/>
    <property type="project" value="UniProtKB-UniRule"/>
</dbReference>
<dbReference type="GO" id="GO:0006275">
    <property type="term" value="P:regulation of DNA replication"/>
    <property type="evidence" value="ECO:0007669"/>
    <property type="project" value="UniProtKB-UniRule"/>
</dbReference>
<dbReference type="CDD" id="cd00009">
    <property type="entry name" value="AAA"/>
    <property type="match status" value="1"/>
</dbReference>
<dbReference type="CDD" id="cd06571">
    <property type="entry name" value="Bac_DnaA_C"/>
    <property type="match status" value="1"/>
</dbReference>
<dbReference type="FunFam" id="1.10.1750.10:FF:000001">
    <property type="entry name" value="Chromosomal replication initiator protein DnaA"/>
    <property type="match status" value="1"/>
</dbReference>
<dbReference type="FunFam" id="1.10.8.60:FF:000003">
    <property type="entry name" value="Chromosomal replication initiator protein DnaA"/>
    <property type="match status" value="1"/>
</dbReference>
<dbReference type="FunFam" id="3.30.300.180:FF:000001">
    <property type="entry name" value="Chromosomal replication initiator protein DnaA"/>
    <property type="match status" value="1"/>
</dbReference>
<dbReference type="FunFam" id="3.40.50.300:FF:000103">
    <property type="entry name" value="Chromosomal replication initiator protein DnaA"/>
    <property type="match status" value="1"/>
</dbReference>
<dbReference type="Gene3D" id="1.10.1750.10">
    <property type="match status" value="1"/>
</dbReference>
<dbReference type="Gene3D" id="1.10.8.60">
    <property type="match status" value="1"/>
</dbReference>
<dbReference type="Gene3D" id="3.30.300.180">
    <property type="match status" value="1"/>
</dbReference>
<dbReference type="Gene3D" id="3.40.50.300">
    <property type="entry name" value="P-loop containing nucleotide triphosphate hydrolases"/>
    <property type="match status" value="1"/>
</dbReference>
<dbReference type="HAMAP" id="MF_00377">
    <property type="entry name" value="DnaA_bact"/>
    <property type="match status" value="1"/>
</dbReference>
<dbReference type="InterPro" id="IPR003593">
    <property type="entry name" value="AAA+_ATPase"/>
</dbReference>
<dbReference type="InterPro" id="IPR001957">
    <property type="entry name" value="Chromosome_initiator_DnaA"/>
</dbReference>
<dbReference type="InterPro" id="IPR020591">
    <property type="entry name" value="Chromosome_initiator_DnaA-like"/>
</dbReference>
<dbReference type="InterPro" id="IPR018312">
    <property type="entry name" value="Chromosome_initiator_DnaA_CS"/>
</dbReference>
<dbReference type="InterPro" id="IPR013159">
    <property type="entry name" value="DnaA_C"/>
</dbReference>
<dbReference type="InterPro" id="IPR013317">
    <property type="entry name" value="DnaA_dom"/>
</dbReference>
<dbReference type="InterPro" id="IPR024633">
    <property type="entry name" value="DnaA_N_dom"/>
</dbReference>
<dbReference type="InterPro" id="IPR038454">
    <property type="entry name" value="DnaA_N_sf"/>
</dbReference>
<dbReference type="InterPro" id="IPR027417">
    <property type="entry name" value="P-loop_NTPase"/>
</dbReference>
<dbReference type="InterPro" id="IPR010921">
    <property type="entry name" value="Trp_repressor/repl_initiator"/>
</dbReference>
<dbReference type="NCBIfam" id="TIGR00362">
    <property type="entry name" value="DnaA"/>
    <property type="match status" value="1"/>
</dbReference>
<dbReference type="PANTHER" id="PTHR30050">
    <property type="entry name" value="CHROMOSOMAL REPLICATION INITIATOR PROTEIN DNAA"/>
    <property type="match status" value="1"/>
</dbReference>
<dbReference type="PANTHER" id="PTHR30050:SF2">
    <property type="entry name" value="CHROMOSOMAL REPLICATION INITIATOR PROTEIN DNAA"/>
    <property type="match status" value="1"/>
</dbReference>
<dbReference type="Pfam" id="PF00308">
    <property type="entry name" value="Bac_DnaA"/>
    <property type="match status" value="1"/>
</dbReference>
<dbReference type="Pfam" id="PF08299">
    <property type="entry name" value="Bac_DnaA_C"/>
    <property type="match status" value="1"/>
</dbReference>
<dbReference type="Pfam" id="PF11638">
    <property type="entry name" value="DnaA_N"/>
    <property type="match status" value="1"/>
</dbReference>
<dbReference type="PRINTS" id="PR00051">
    <property type="entry name" value="DNAA"/>
</dbReference>
<dbReference type="SMART" id="SM00382">
    <property type="entry name" value="AAA"/>
    <property type="match status" value="1"/>
</dbReference>
<dbReference type="SMART" id="SM00760">
    <property type="entry name" value="Bac_DnaA_C"/>
    <property type="match status" value="1"/>
</dbReference>
<dbReference type="SUPFAM" id="SSF52540">
    <property type="entry name" value="P-loop containing nucleoside triphosphate hydrolases"/>
    <property type="match status" value="1"/>
</dbReference>
<dbReference type="SUPFAM" id="SSF48295">
    <property type="entry name" value="TrpR-like"/>
    <property type="match status" value="1"/>
</dbReference>
<dbReference type="PROSITE" id="PS01008">
    <property type="entry name" value="DNAA"/>
    <property type="match status" value="1"/>
</dbReference>
<gene>
    <name evidence="1" type="primary">dnaA</name>
    <name type="ordered locus">ECIAI1_3880</name>
</gene>
<proteinExistence type="inferred from homology"/>
<sequence length="467" mass="52551">MSLSLWQQCLARLQDELPATEFSMWIRPLQAELSDNTLALYAPNRFVLDWVRDKYLNNINGLLTSFCGADAPQLRFEVGTKPVTQTPQAAVTSNVAAPAQVAQTQPQRAAPSTRSGWDNVPAPAEPTYRSNVNVKHTFDNFVEGKSNQLARAAARQVADNPGGAYNPLFLYGGTGLGKTHLLHAVGNGIMARKPNAKVVYMHSERFVQDMVKALQNNAIEEFKRYYRSVDALLIDDIQFFANKERSQEEFFHTFNALLEGNQQIILTSDRYPKEINGVEDRLKSRFGWGLTVAIEPPELETRVAILMKKADENDIRLPGEVAFFIAKRLRSNVRELEGALNRVIANANFTGRAITIDFVREALRDLLALQEKLVTIDNIQKTVAEYYKIKVADLLSKRRSRSVARPRQMAMALAKELTNHSLPEIGDAFGGRDHTTVLHACRKIEQLREESHDIKEDFSNLIRTLSS</sequence>
<organism>
    <name type="scientific">Escherichia coli O8 (strain IAI1)</name>
    <dbReference type="NCBI Taxonomy" id="585034"/>
    <lineage>
        <taxon>Bacteria</taxon>
        <taxon>Pseudomonadati</taxon>
        <taxon>Pseudomonadota</taxon>
        <taxon>Gammaproteobacteria</taxon>
        <taxon>Enterobacterales</taxon>
        <taxon>Enterobacteriaceae</taxon>
        <taxon>Escherichia</taxon>
    </lineage>
</organism>
<feature type="chain" id="PRO_1000121976" description="Chromosomal replication initiator protein DnaA">
    <location>
        <begin position="1"/>
        <end position="467"/>
    </location>
</feature>
<feature type="region of interest" description="Domain I, interacts with DnaA modulators" evidence="1">
    <location>
        <begin position="1"/>
        <end position="90"/>
    </location>
</feature>
<feature type="region of interest" description="Domain II" evidence="1">
    <location>
        <begin position="91"/>
        <end position="130"/>
    </location>
</feature>
<feature type="region of interest" description="Disordered" evidence="2">
    <location>
        <begin position="98"/>
        <end position="119"/>
    </location>
</feature>
<feature type="region of interest" description="Domain III, AAA+ region" evidence="1">
    <location>
        <begin position="131"/>
        <end position="347"/>
    </location>
</feature>
<feature type="region of interest" description="Domain IV, binds dsDNA" evidence="1">
    <location>
        <begin position="348"/>
        <end position="467"/>
    </location>
</feature>
<feature type="compositionally biased region" description="Low complexity" evidence="2">
    <location>
        <begin position="98"/>
        <end position="111"/>
    </location>
</feature>
<feature type="binding site" evidence="1">
    <location>
        <position position="175"/>
    </location>
    <ligand>
        <name>ATP</name>
        <dbReference type="ChEBI" id="CHEBI:30616"/>
    </ligand>
</feature>
<feature type="binding site" evidence="1">
    <location>
        <position position="177"/>
    </location>
    <ligand>
        <name>ATP</name>
        <dbReference type="ChEBI" id="CHEBI:30616"/>
    </ligand>
</feature>
<feature type="binding site" evidence="1">
    <location>
        <position position="178"/>
    </location>
    <ligand>
        <name>ATP</name>
        <dbReference type="ChEBI" id="CHEBI:30616"/>
    </ligand>
</feature>
<feature type="binding site" evidence="1">
    <location>
        <position position="179"/>
    </location>
    <ligand>
        <name>ATP</name>
        <dbReference type="ChEBI" id="CHEBI:30616"/>
    </ligand>
</feature>
<protein>
    <recommendedName>
        <fullName evidence="1">Chromosomal replication initiator protein DnaA</fullName>
    </recommendedName>
</protein>
<reference key="1">
    <citation type="journal article" date="2009" name="PLoS Genet.">
        <title>Organised genome dynamics in the Escherichia coli species results in highly diverse adaptive paths.</title>
        <authorList>
            <person name="Touchon M."/>
            <person name="Hoede C."/>
            <person name="Tenaillon O."/>
            <person name="Barbe V."/>
            <person name="Baeriswyl S."/>
            <person name="Bidet P."/>
            <person name="Bingen E."/>
            <person name="Bonacorsi S."/>
            <person name="Bouchier C."/>
            <person name="Bouvet O."/>
            <person name="Calteau A."/>
            <person name="Chiapello H."/>
            <person name="Clermont O."/>
            <person name="Cruveiller S."/>
            <person name="Danchin A."/>
            <person name="Diard M."/>
            <person name="Dossat C."/>
            <person name="Karoui M.E."/>
            <person name="Frapy E."/>
            <person name="Garry L."/>
            <person name="Ghigo J.M."/>
            <person name="Gilles A.M."/>
            <person name="Johnson J."/>
            <person name="Le Bouguenec C."/>
            <person name="Lescat M."/>
            <person name="Mangenot S."/>
            <person name="Martinez-Jehanne V."/>
            <person name="Matic I."/>
            <person name="Nassif X."/>
            <person name="Oztas S."/>
            <person name="Petit M.A."/>
            <person name="Pichon C."/>
            <person name="Rouy Z."/>
            <person name="Ruf C.S."/>
            <person name="Schneider D."/>
            <person name="Tourret J."/>
            <person name="Vacherie B."/>
            <person name="Vallenet D."/>
            <person name="Medigue C."/>
            <person name="Rocha E.P.C."/>
            <person name="Denamur E."/>
        </authorList>
    </citation>
    <scope>NUCLEOTIDE SEQUENCE [LARGE SCALE GENOMIC DNA]</scope>
    <source>
        <strain>IAI1</strain>
    </source>
</reference>